<sequence length="244" mass="29204">MSDWMPIAKEYDPLKAGSIDGTDEDPHDRAVWRAMLARYVPNKGVTGDPLLTLFVARLNSQTKEEKLKEVFSRYGDIRRLRLVRDLVTGFSKGYAFIEYKEERALLKAYRDADGLVIDQHEIFVDYELERTLRGWIPRRLGGGLGGKKESGQLRFGGRDRPFRKPINLPVVKNEPHREGKRERRERSRSRDRHWDPRPRERDHDRGREKHWQDRARVWPENDWEREREFRDERAKTRDKRDRSK</sequence>
<evidence type="ECO:0000250" key="1"/>
<evidence type="ECO:0000250" key="2">
    <source>
        <dbReference type="UniProtKB" id="Q16560"/>
    </source>
</evidence>
<evidence type="ECO:0000255" key="3">
    <source>
        <dbReference type="PROSITE-ProRule" id="PRU00176"/>
    </source>
</evidence>
<evidence type="ECO:0000256" key="4">
    <source>
        <dbReference type="SAM" id="MobiDB-lite"/>
    </source>
</evidence>
<comment type="subunit">
    <text evidence="1">Component of the U11/U12 snRNPs that are part of the U12-type spliceosome.</text>
</comment>
<comment type="subcellular location">
    <subcellularLocation>
        <location evidence="1">Nucleus</location>
    </subcellularLocation>
</comment>
<gene>
    <name type="primary">Snrnp35</name>
    <name type="synonym">U1snrnpbp</name>
</gene>
<accession>Q5U1W5</accession>
<keyword id="KW-1017">Isopeptide bond</keyword>
<keyword id="KW-0507">mRNA processing</keyword>
<keyword id="KW-0508">mRNA splicing</keyword>
<keyword id="KW-0539">Nucleus</keyword>
<keyword id="KW-1185">Reference proteome</keyword>
<keyword id="KW-0694">RNA-binding</keyword>
<keyword id="KW-0747">Spliceosome</keyword>
<keyword id="KW-0832">Ubl conjugation</keyword>
<feature type="chain" id="PRO_0000307909" description="U11/U12 small nuclear ribonucleoprotein 35 kDa protein">
    <location>
        <begin position="1"/>
        <end position="244"/>
    </location>
</feature>
<feature type="domain" description="RRM" evidence="3">
    <location>
        <begin position="51"/>
        <end position="129"/>
    </location>
</feature>
<feature type="region of interest" description="Disordered" evidence="4">
    <location>
        <begin position="146"/>
        <end position="244"/>
    </location>
</feature>
<feature type="compositionally biased region" description="Basic and acidic residues" evidence="4">
    <location>
        <begin position="146"/>
        <end position="162"/>
    </location>
</feature>
<feature type="compositionally biased region" description="Basic and acidic residues" evidence="4">
    <location>
        <begin position="173"/>
        <end position="185"/>
    </location>
</feature>
<feature type="compositionally biased region" description="Basic and acidic residues" evidence="4">
    <location>
        <begin position="192"/>
        <end position="244"/>
    </location>
</feature>
<feature type="cross-link" description="Glycyl lysine isopeptide (Lys-Gly) (interchain with G-Cter in SUMO2)" evidence="2">
    <location>
        <position position="172"/>
    </location>
</feature>
<protein>
    <recommendedName>
        <fullName>U11/U12 small nuclear ribonucleoprotein 35 kDa protein</fullName>
        <shortName>U11/U12 snRNP 35 kDa protein</shortName>
    </recommendedName>
    <alternativeName>
        <fullName>U1 snRNP-binding protein homolog</fullName>
    </alternativeName>
</protein>
<name>U1SBP_RAT</name>
<proteinExistence type="evidence at transcript level"/>
<dbReference type="EMBL" id="BC086435">
    <property type="protein sequence ID" value="AAH86435.1"/>
    <property type="molecule type" value="mRNA"/>
</dbReference>
<dbReference type="RefSeq" id="NP_001014149.1">
    <property type="nucleotide sequence ID" value="NM_001014127.1"/>
</dbReference>
<dbReference type="SMR" id="Q5U1W5"/>
<dbReference type="FunCoup" id="Q5U1W5">
    <property type="interactions" value="595"/>
</dbReference>
<dbReference type="STRING" id="10116.ENSRNOP00000001402"/>
<dbReference type="PhosphoSitePlus" id="Q5U1W5"/>
<dbReference type="PaxDb" id="10116-ENSRNOP00000001402"/>
<dbReference type="GeneID" id="360803"/>
<dbReference type="KEGG" id="rno:360803"/>
<dbReference type="UCSC" id="RGD:1310724">
    <property type="organism name" value="rat"/>
</dbReference>
<dbReference type="AGR" id="RGD:1310724"/>
<dbReference type="CTD" id="11066"/>
<dbReference type="RGD" id="1310724">
    <property type="gene designation" value="Snrnp35"/>
</dbReference>
<dbReference type="eggNOG" id="KOG0113">
    <property type="taxonomic scope" value="Eukaryota"/>
</dbReference>
<dbReference type="InParanoid" id="Q5U1W5"/>
<dbReference type="OrthoDB" id="6159137at2759"/>
<dbReference type="PhylomeDB" id="Q5U1W5"/>
<dbReference type="Reactome" id="R-RNO-72165">
    <property type="pathway name" value="mRNA Splicing - Minor Pathway"/>
</dbReference>
<dbReference type="PRO" id="PR:Q5U1W5"/>
<dbReference type="Proteomes" id="UP000002494">
    <property type="component" value="Unplaced"/>
</dbReference>
<dbReference type="GO" id="GO:0005634">
    <property type="term" value="C:nucleus"/>
    <property type="evidence" value="ECO:0000266"/>
    <property type="project" value="RGD"/>
</dbReference>
<dbReference type="GO" id="GO:0005689">
    <property type="term" value="C:U12-type spliceosomal complex"/>
    <property type="evidence" value="ECO:0000266"/>
    <property type="project" value="RGD"/>
</dbReference>
<dbReference type="GO" id="GO:0003729">
    <property type="term" value="F:mRNA binding"/>
    <property type="evidence" value="ECO:0000318"/>
    <property type="project" value="GO_Central"/>
</dbReference>
<dbReference type="GO" id="GO:0017069">
    <property type="term" value="F:snRNA binding"/>
    <property type="evidence" value="ECO:0000318"/>
    <property type="project" value="GO_Central"/>
</dbReference>
<dbReference type="GO" id="GO:0000398">
    <property type="term" value="P:mRNA splicing, via spliceosome"/>
    <property type="evidence" value="ECO:0000318"/>
    <property type="project" value="GO_Central"/>
</dbReference>
<dbReference type="CDD" id="cd12237">
    <property type="entry name" value="RRM_snRNP35"/>
    <property type="match status" value="1"/>
</dbReference>
<dbReference type="FunFam" id="3.30.70.330:FF:000132">
    <property type="entry name" value="Small nuclear ribonucleoprotein U11/U12 subunit 35"/>
    <property type="match status" value="1"/>
</dbReference>
<dbReference type="Gene3D" id="3.30.70.330">
    <property type="match status" value="1"/>
</dbReference>
<dbReference type="InterPro" id="IPR012677">
    <property type="entry name" value="Nucleotide-bd_a/b_plait_sf"/>
</dbReference>
<dbReference type="InterPro" id="IPR035979">
    <property type="entry name" value="RBD_domain_sf"/>
</dbReference>
<dbReference type="InterPro" id="IPR000504">
    <property type="entry name" value="RRM_dom"/>
</dbReference>
<dbReference type="InterPro" id="IPR034146">
    <property type="entry name" value="snRNP35_RRM"/>
</dbReference>
<dbReference type="InterPro" id="IPR051183">
    <property type="entry name" value="U1_U11-U12_snRNP_70-35kDa"/>
</dbReference>
<dbReference type="PANTHER" id="PTHR13952">
    <property type="entry name" value="U1 SMALL NUCLEAR RIBONUCLEOPROTEIN 70 KD"/>
    <property type="match status" value="1"/>
</dbReference>
<dbReference type="PANTHER" id="PTHR13952:SF6">
    <property type="entry name" value="U11_U12 SMALL NUCLEAR RIBONUCLEOPROTEIN 35 KDA PROTEIN"/>
    <property type="match status" value="1"/>
</dbReference>
<dbReference type="Pfam" id="PF00076">
    <property type="entry name" value="RRM_1"/>
    <property type="match status" value="1"/>
</dbReference>
<dbReference type="SMART" id="SM00360">
    <property type="entry name" value="RRM"/>
    <property type="match status" value="1"/>
</dbReference>
<dbReference type="SUPFAM" id="SSF54928">
    <property type="entry name" value="RNA-binding domain, RBD"/>
    <property type="match status" value="1"/>
</dbReference>
<dbReference type="PROSITE" id="PS50102">
    <property type="entry name" value="RRM"/>
    <property type="match status" value="1"/>
</dbReference>
<organism>
    <name type="scientific">Rattus norvegicus</name>
    <name type="common">Rat</name>
    <dbReference type="NCBI Taxonomy" id="10116"/>
    <lineage>
        <taxon>Eukaryota</taxon>
        <taxon>Metazoa</taxon>
        <taxon>Chordata</taxon>
        <taxon>Craniata</taxon>
        <taxon>Vertebrata</taxon>
        <taxon>Euteleostomi</taxon>
        <taxon>Mammalia</taxon>
        <taxon>Eutheria</taxon>
        <taxon>Euarchontoglires</taxon>
        <taxon>Glires</taxon>
        <taxon>Rodentia</taxon>
        <taxon>Myomorpha</taxon>
        <taxon>Muroidea</taxon>
        <taxon>Muridae</taxon>
        <taxon>Murinae</taxon>
        <taxon>Rattus</taxon>
    </lineage>
</organism>
<reference key="1">
    <citation type="journal article" date="2004" name="Genome Res.">
        <title>The status, quality, and expansion of the NIH full-length cDNA project: the Mammalian Gene Collection (MGC).</title>
        <authorList>
            <consortium name="The MGC Project Team"/>
        </authorList>
    </citation>
    <scope>NUCLEOTIDE SEQUENCE [LARGE SCALE MRNA]</scope>
    <source>
        <tissue>Ovary</tissue>
    </source>
</reference>